<reference key="1">
    <citation type="submission" date="2009-01" db="EMBL/GenBank/DDBJ databases">
        <title>Complete sequence of Chloroflexus sp. Y-400-fl.</title>
        <authorList>
            <consortium name="US DOE Joint Genome Institute"/>
            <person name="Lucas S."/>
            <person name="Copeland A."/>
            <person name="Lapidus A."/>
            <person name="Glavina del Rio T."/>
            <person name="Dalin E."/>
            <person name="Tice H."/>
            <person name="Bruce D."/>
            <person name="Goodwin L."/>
            <person name="Pitluck S."/>
            <person name="Sims D."/>
            <person name="Kiss H."/>
            <person name="Brettin T."/>
            <person name="Detter J.C."/>
            <person name="Han C."/>
            <person name="Larimer F."/>
            <person name="Land M."/>
            <person name="Hauser L."/>
            <person name="Kyrpides N."/>
            <person name="Ovchinnikova G."/>
            <person name="Bryant D.A."/>
            <person name="Richardson P."/>
        </authorList>
    </citation>
    <scope>NUCLEOTIDE SEQUENCE [LARGE SCALE GENOMIC DNA]</scope>
    <source>
        <strain>ATCC 29364 / DSM 637 / Y-400-fl</strain>
    </source>
</reference>
<accession>B9LJ76</accession>
<protein>
    <recommendedName>
        <fullName evidence="1">Large ribosomal subunit protein bL21</fullName>
    </recommendedName>
    <alternativeName>
        <fullName evidence="2">50S ribosomal protein L21</fullName>
    </alternativeName>
</protein>
<comment type="function">
    <text evidence="1">This protein binds to 23S rRNA in the presence of protein L20.</text>
</comment>
<comment type="subunit">
    <text evidence="1">Part of the 50S ribosomal subunit. Contacts protein L20.</text>
</comment>
<comment type="similarity">
    <text evidence="1">Belongs to the bacterial ribosomal protein bL21 family.</text>
</comment>
<name>RL21_CHLSY</name>
<sequence length="103" mass="11698">MYAIIRDRGMQYRVEPGQVLTIDLISAEPGSQIELGEVLLVGDAEQVKVGSPLVEGAVVRAEVLGEQKGDKIVVFRYRNKTRYRRRTGHRQRYTKIRISEIVA</sequence>
<organism>
    <name type="scientific">Chloroflexus aurantiacus (strain ATCC 29364 / DSM 637 / Y-400-fl)</name>
    <dbReference type="NCBI Taxonomy" id="480224"/>
    <lineage>
        <taxon>Bacteria</taxon>
        <taxon>Bacillati</taxon>
        <taxon>Chloroflexota</taxon>
        <taxon>Chloroflexia</taxon>
        <taxon>Chloroflexales</taxon>
        <taxon>Chloroflexineae</taxon>
        <taxon>Chloroflexaceae</taxon>
        <taxon>Chloroflexus</taxon>
    </lineage>
</organism>
<dbReference type="EMBL" id="CP001364">
    <property type="protein sequence ID" value="ACM53892.1"/>
    <property type="molecule type" value="Genomic_DNA"/>
</dbReference>
<dbReference type="SMR" id="B9LJ76"/>
<dbReference type="KEGG" id="chl:Chy400_2498"/>
<dbReference type="HOGENOM" id="CLU_061463_3_2_0"/>
<dbReference type="OrthoDB" id="9813334at2"/>
<dbReference type="GO" id="GO:0005737">
    <property type="term" value="C:cytoplasm"/>
    <property type="evidence" value="ECO:0007669"/>
    <property type="project" value="UniProtKB-ARBA"/>
</dbReference>
<dbReference type="GO" id="GO:1990904">
    <property type="term" value="C:ribonucleoprotein complex"/>
    <property type="evidence" value="ECO:0007669"/>
    <property type="project" value="UniProtKB-KW"/>
</dbReference>
<dbReference type="GO" id="GO:0005840">
    <property type="term" value="C:ribosome"/>
    <property type="evidence" value="ECO:0007669"/>
    <property type="project" value="UniProtKB-KW"/>
</dbReference>
<dbReference type="GO" id="GO:0019843">
    <property type="term" value="F:rRNA binding"/>
    <property type="evidence" value="ECO:0007669"/>
    <property type="project" value="UniProtKB-UniRule"/>
</dbReference>
<dbReference type="GO" id="GO:0003735">
    <property type="term" value="F:structural constituent of ribosome"/>
    <property type="evidence" value="ECO:0007669"/>
    <property type="project" value="InterPro"/>
</dbReference>
<dbReference type="GO" id="GO:0006412">
    <property type="term" value="P:translation"/>
    <property type="evidence" value="ECO:0007669"/>
    <property type="project" value="UniProtKB-UniRule"/>
</dbReference>
<dbReference type="HAMAP" id="MF_01363">
    <property type="entry name" value="Ribosomal_bL21"/>
    <property type="match status" value="1"/>
</dbReference>
<dbReference type="InterPro" id="IPR028909">
    <property type="entry name" value="bL21-like"/>
</dbReference>
<dbReference type="InterPro" id="IPR036164">
    <property type="entry name" value="bL21-like_sf"/>
</dbReference>
<dbReference type="InterPro" id="IPR001787">
    <property type="entry name" value="Ribosomal_bL21"/>
</dbReference>
<dbReference type="InterPro" id="IPR018258">
    <property type="entry name" value="Ribosomal_bL21_CS"/>
</dbReference>
<dbReference type="NCBIfam" id="TIGR00061">
    <property type="entry name" value="L21"/>
    <property type="match status" value="1"/>
</dbReference>
<dbReference type="PANTHER" id="PTHR21349">
    <property type="entry name" value="50S RIBOSOMAL PROTEIN L21"/>
    <property type="match status" value="1"/>
</dbReference>
<dbReference type="PANTHER" id="PTHR21349:SF0">
    <property type="entry name" value="LARGE RIBOSOMAL SUBUNIT PROTEIN BL21M"/>
    <property type="match status" value="1"/>
</dbReference>
<dbReference type="Pfam" id="PF00829">
    <property type="entry name" value="Ribosomal_L21p"/>
    <property type="match status" value="1"/>
</dbReference>
<dbReference type="SUPFAM" id="SSF141091">
    <property type="entry name" value="L21p-like"/>
    <property type="match status" value="1"/>
</dbReference>
<dbReference type="PROSITE" id="PS01169">
    <property type="entry name" value="RIBOSOMAL_L21"/>
    <property type="match status" value="1"/>
</dbReference>
<keyword id="KW-0687">Ribonucleoprotein</keyword>
<keyword id="KW-0689">Ribosomal protein</keyword>
<keyword id="KW-0694">RNA-binding</keyword>
<keyword id="KW-0699">rRNA-binding</keyword>
<gene>
    <name evidence="1" type="primary">rplU</name>
    <name type="ordered locus">Chy400_2498</name>
</gene>
<proteinExistence type="inferred from homology"/>
<evidence type="ECO:0000255" key="1">
    <source>
        <dbReference type="HAMAP-Rule" id="MF_01363"/>
    </source>
</evidence>
<evidence type="ECO:0000305" key="2"/>
<feature type="chain" id="PRO_1000166711" description="Large ribosomal subunit protein bL21">
    <location>
        <begin position="1"/>
        <end position="103"/>
    </location>
</feature>